<organism>
    <name type="scientific">Bison bison</name>
    <name type="common">American bison</name>
    <name type="synonym">Bos bison</name>
    <dbReference type="NCBI Taxonomy" id="9901"/>
    <lineage>
        <taxon>Eukaryota</taxon>
        <taxon>Metazoa</taxon>
        <taxon>Chordata</taxon>
        <taxon>Craniata</taxon>
        <taxon>Vertebrata</taxon>
        <taxon>Euteleostomi</taxon>
        <taxon>Mammalia</taxon>
        <taxon>Eutheria</taxon>
        <taxon>Laurasiatheria</taxon>
        <taxon>Artiodactyla</taxon>
        <taxon>Ruminantia</taxon>
        <taxon>Pecora</taxon>
        <taxon>Bovidae</taxon>
        <taxon>Bovinae</taxon>
        <taxon>Bison</taxon>
    </lineage>
</organism>
<proteinExistence type="evidence at transcript level"/>
<feature type="chain" id="PRO_0000212583" description="Natural resistance-associated macrophage protein 1">
    <location>
        <begin position="1"/>
        <end position="548"/>
    </location>
</feature>
<feature type="topological domain" description="Cytoplasmic" evidence="2">
    <location>
        <begin position="1"/>
        <end position="55"/>
    </location>
</feature>
<feature type="transmembrane region" description="Helical" evidence="2">
    <location>
        <begin position="56"/>
        <end position="73"/>
    </location>
</feature>
<feature type="topological domain" description="Extracellular" evidence="2">
    <location>
        <begin position="74"/>
        <end position="82"/>
    </location>
</feature>
<feature type="transmembrane region" description="Helical" evidence="2">
    <location>
        <begin position="83"/>
        <end position="102"/>
    </location>
</feature>
<feature type="topological domain" description="Cytoplasmic" evidence="2">
    <location>
        <begin position="103"/>
        <end position="139"/>
    </location>
</feature>
<feature type="transmembrane region" description="Helical" evidence="2">
    <location>
        <begin position="140"/>
        <end position="160"/>
    </location>
</feature>
<feature type="topological domain" description="Extracellular" evidence="2">
    <location>
        <begin position="161"/>
        <end position="164"/>
    </location>
</feature>
<feature type="transmembrane region" description="Helical" evidence="2">
    <location>
        <begin position="165"/>
        <end position="184"/>
    </location>
</feature>
<feature type="topological domain" description="Cytoplasmic" evidence="2">
    <location>
        <begin position="185"/>
        <end position="193"/>
    </location>
</feature>
<feature type="transmembrane region" description="Helical" evidence="2">
    <location>
        <begin position="194"/>
        <end position="214"/>
    </location>
</feature>
<feature type="topological domain" description="Extracellular" evidence="2">
    <location>
        <begin position="215"/>
        <end position="237"/>
    </location>
</feature>
<feature type="transmembrane region" description="Helical" evidence="2">
    <location>
        <begin position="238"/>
        <end position="256"/>
    </location>
</feature>
<feature type="topological domain" description="Cytoplasmic" evidence="2">
    <location>
        <begin position="257"/>
        <end position="284"/>
    </location>
</feature>
<feature type="transmembrane region" description="Helical" evidence="2">
    <location>
        <begin position="285"/>
        <end position="304"/>
    </location>
</feature>
<feature type="topological domain" description="Extracellular" evidence="2">
    <location>
        <begin position="305"/>
        <end position="346"/>
    </location>
</feature>
<feature type="transmembrane region" description="Helical" evidence="2">
    <location>
        <begin position="347"/>
        <end position="366"/>
    </location>
</feature>
<feature type="topological domain" description="Cytoplasmic" evidence="2">
    <location>
        <begin position="367"/>
        <end position="397"/>
    </location>
</feature>
<feature type="transmembrane region" description="Helical" evidence="2">
    <location>
        <begin position="398"/>
        <end position="415"/>
    </location>
</feature>
<feature type="topological domain" description="Extracellular" evidence="2">
    <location>
        <begin position="416"/>
        <end position="426"/>
    </location>
</feature>
<feature type="transmembrane region" description="Helical" evidence="2">
    <location>
        <begin position="427"/>
        <end position="447"/>
    </location>
</feature>
<feature type="topological domain" description="Cytoplasmic" evidence="2">
    <location>
        <begin position="448"/>
        <end position="463"/>
    </location>
</feature>
<feature type="transmembrane region" description="Helical" evidence="2">
    <location>
        <begin position="464"/>
        <end position="485"/>
    </location>
</feature>
<feature type="topological domain" description="Extracellular" evidence="2">
    <location>
        <begin position="486"/>
        <end position="493"/>
    </location>
</feature>
<feature type="transmembrane region" description="Helical" evidence="2">
    <location>
        <begin position="494"/>
        <end position="513"/>
    </location>
</feature>
<feature type="topological domain" description="Cytoplasmic" evidence="2">
    <location>
        <begin position="514"/>
        <end position="548"/>
    </location>
</feature>
<feature type="region of interest" description="Disordered" evidence="3">
    <location>
        <begin position="1"/>
        <end position="38"/>
    </location>
</feature>
<feature type="glycosylation site" description="N-linked (GlcNAc...) asparagine" evidence="2">
    <location>
        <position position="321"/>
    </location>
</feature>
<feature type="glycosylation site" description="N-linked (GlcNAc...) asparagine" evidence="2">
    <location>
        <position position="335"/>
    </location>
</feature>
<name>NRAM1_BISBI</name>
<protein>
    <recommendedName>
        <fullName>Natural resistance-associated macrophage protein 1</fullName>
        <shortName>NRAMP 1</shortName>
    </recommendedName>
    <alternativeName>
        <fullName>Solute carrier family 11 member 1</fullName>
    </alternativeName>
</protein>
<evidence type="ECO:0000250" key="1">
    <source>
        <dbReference type="UniProtKB" id="P49279"/>
    </source>
</evidence>
<evidence type="ECO:0000255" key="2"/>
<evidence type="ECO:0000256" key="3">
    <source>
        <dbReference type="SAM" id="MobiDB-lite"/>
    </source>
</evidence>
<evidence type="ECO:0000305" key="4"/>
<gene>
    <name type="primary">SLC11A1</name>
    <name type="synonym">NRAMP1</name>
</gene>
<comment type="function">
    <text evidence="1">Macrophage-specific antiporter that fluxes metal ions in either direction against a proton gradient. Localized to late endosomal lysosomal membranes, delivers bivalent cations from the cytosol into these acidic compartments where they may directly affect antimicrobial activity. Involved in iron metabolism and host natural resistance to infection with intracellular parasites. Pathogen resistance involves sequestration of Fe(2+) and Mn(2+), cofactors of both prokaryotic and eukaryotic catalases and superoxide dismutases, not only to protect the macrophage against its own generation of reactive oxygen species, but to deny the cations to the pathogen for synthesis of its protective enzymes.</text>
</comment>
<comment type="catalytic activity">
    <reaction evidence="1">
        <text>Zn(2+)(in) + H(+)(out) = Zn(2+)(out) + H(+)(in)</text>
        <dbReference type="Rhea" id="RHEA:28839"/>
        <dbReference type="ChEBI" id="CHEBI:15378"/>
        <dbReference type="ChEBI" id="CHEBI:29105"/>
    </reaction>
</comment>
<comment type="catalytic activity">
    <reaction evidence="1">
        <text>Fe(2+)(in) + H(+)(out) = Fe(2+)(out) + H(+)(in)</text>
        <dbReference type="Rhea" id="RHEA:29439"/>
        <dbReference type="ChEBI" id="CHEBI:15378"/>
        <dbReference type="ChEBI" id="CHEBI:29033"/>
    </reaction>
</comment>
<comment type="catalytic activity">
    <reaction evidence="1">
        <text>Mn(2+)(in) + H(+)(out) = Mn(2+)(out) + H(+)(in)</text>
        <dbReference type="Rhea" id="RHEA:73063"/>
        <dbReference type="ChEBI" id="CHEBI:15378"/>
        <dbReference type="ChEBI" id="CHEBI:29035"/>
    </reaction>
</comment>
<comment type="subcellular location">
    <subcellularLocation>
        <location evidence="1">Late endosome membrane</location>
        <topology evidence="2">Multi-pass membrane protein</topology>
    </subcellularLocation>
    <subcellularLocation>
        <location evidence="1">Lysosome membrane</location>
        <topology evidence="2">Multi-pass membrane protein</topology>
    </subcellularLocation>
</comment>
<comment type="similarity">
    <text evidence="4">Belongs to the NRAMP family.</text>
</comment>
<sequence>MSGDTGPPKQGGTRYGSISSPPSPEPQQAPPGGTYLSEKIPIPDTESGTFSLRKLWAFTGPGFLMSIAFLDPGNIESDLQAGAVAGFKLLWVLLWATVLGLLCQRLAARLGVVTGKDLGEVCHLYYPKVPRILLWLTIELAIVGSDMQEVIGTAIAFSLLSAGRIPLWGGVLITIVDAFFFLFLDNYGLRKLEAFFGFLITIMALTFGYEYVVAQPAQGALLQGLFLPSCPGCGQPELLQAVGIIGAIIMPHNIYLHSSLVKSREVDRSRRADIREANMYFLIEATIALSVSFLINLFVMAVFGQAFYKQTNQAAFNICANSSLQDYAPIFPRNNLTVAVDIYQGGVILGCLFGPAALYIWAVGLLAAGQSSTMTGTYAGQFVMEGFLKLRWSRFARVLLTRSCAILPTVLLAVFRDLRDLSGLNDLLNVLQSLLLPFAVLPILTFTSMPALMREFANGLVSKVITSSIMVLVCAVNLYFVISYVPSLPHPAYFSLVALLAAAYLGLTTYLVWTCLITQGATLLAHSSHQRFLYGLPEEDQEKGRTSG</sequence>
<dbReference type="EMBL" id="U39614">
    <property type="protein sequence ID" value="AAB17552.1"/>
    <property type="molecule type" value="mRNA"/>
</dbReference>
<dbReference type="SMR" id="Q95102"/>
<dbReference type="GlyCosmos" id="Q95102">
    <property type="glycosylation" value="2 sites, No reported glycans"/>
</dbReference>
<dbReference type="GO" id="GO:0031902">
    <property type="term" value="C:late endosome membrane"/>
    <property type="evidence" value="ECO:0007669"/>
    <property type="project" value="UniProtKB-SubCell"/>
</dbReference>
<dbReference type="GO" id="GO:0005765">
    <property type="term" value="C:lysosomal membrane"/>
    <property type="evidence" value="ECO:0007669"/>
    <property type="project" value="UniProtKB-SubCell"/>
</dbReference>
<dbReference type="GO" id="GO:0030670">
    <property type="term" value="C:phagocytic vesicle membrane"/>
    <property type="evidence" value="ECO:0007669"/>
    <property type="project" value="TreeGrafter"/>
</dbReference>
<dbReference type="GO" id="GO:0005886">
    <property type="term" value="C:plasma membrane"/>
    <property type="evidence" value="ECO:0007669"/>
    <property type="project" value="TreeGrafter"/>
</dbReference>
<dbReference type="GO" id="GO:0015086">
    <property type="term" value="F:cadmium ion transmembrane transporter activity"/>
    <property type="evidence" value="ECO:0007669"/>
    <property type="project" value="TreeGrafter"/>
</dbReference>
<dbReference type="GO" id="GO:0005381">
    <property type="term" value="F:iron ion transmembrane transporter activity"/>
    <property type="evidence" value="ECO:0000250"/>
    <property type="project" value="UniProtKB"/>
</dbReference>
<dbReference type="GO" id="GO:0005384">
    <property type="term" value="F:manganese ion transmembrane transporter activity"/>
    <property type="evidence" value="ECO:0000250"/>
    <property type="project" value="UniProtKB"/>
</dbReference>
<dbReference type="GO" id="GO:0051139">
    <property type="term" value="F:metal cation:proton antiporter activity"/>
    <property type="evidence" value="ECO:0000250"/>
    <property type="project" value="UniProtKB"/>
</dbReference>
<dbReference type="GO" id="GO:0006826">
    <property type="term" value="P:iron ion transport"/>
    <property type="evidence" value="ECO:0000250"/>
    <property type="project" value="UniProtKB"/>
</dbReference>
<dbReference type="GO" id="GO:0006828">
    <property type="term" value="P:manganese ion transport"/>
    <property type="evidence" value="ECO:0000250"/>
    <property type="project" value="UniProtKB"/>
</dbReference>
<dbReference type="HAMAP" id="MF_00221">
    <property type="entry name" value="NRAMP"/>
    <property type="match status" value="1"/>
</dbReference>
<dbReference type="InterPro" id="IPR001046">
    <property type="entry name" value="NRAMP_fam"/>
</dbReference>
<dbReference type="NCBIfam" id="TIGR01197">
    <property type="entry name" value="nramp"/>
    <property type="match status" value="1"/>
</dbReference>
<dbReference type="NCBIfam" id="NF037982">
    <property type="entry name" value="Nramp_1"/>
    <property type="match status" value="1"/>
</dbReference>
<dbReference type="PANTHER" id="PTHR11706:SF52">
    <property type="entry name" value="NATURAL RESISTANCE-ASSOCIATED MACROPHAGE PROTEIN 1"/>
    <property type="match status" value="1"/>
</dbReference>
<dbReference type="PANTHER" id="PTHR11706">
    <property type="entry name" value="SOLUTE CARRIER PROTEIN FAMILY 11 MEMBER"/>
    <property type="match status" value="1"/>
</dbReference>
<dbReference type="Pfam" id="PF01566">
    <property type="entry name" value="Nramp"/>
    <property type="match status" value="1"/>
</dbReference>
<dbReference type="PRINTS" id="PR00447">
    <property type="entry name" value="NATRESASSCMP"/>
</dbReference>
<keyword id="KW-0967">Endosome</keyword>
<keyword id="KW-0325">Glycoprotein</keyword>
<keyword id="KW-0406">Ion transport</keyword>
<keyword id="KW-0408">Iron</keyword>
<keyword id="KW-0410">Iron transport</keyword>
<keyword id="KW-0458">Lysosome</keyword>
<keyword id="KW-0472">Membrane</keyword>
<keyword id="KW-0812">Transmembrane</keyword>
<keyword id="KW-1133">Transmembrane helix</keyword>
<keyword id="KW-0813">Transport</keyword>
<accession>Q95102</accession>
<reference key="1">
    <citation type="submission" date="1996-10" db="EMBL/GenBank/DDBJ databases">
        <title>Isolation, cloning of Bison Nramp1 (BisNramp1) -- a gene strongly associated with natural resistance to Brucellosis.</title>
        <authorList>
            <person name="Feng J."/>
            <person name="Li Y."/>
            <person name="Templeton J.W."/>
        </authorList>
    </citation>
    <scope>NUCLEOTIDE SEQUENCE [MRNA]</scope>
</reference>